<reference key="1">
    <citation type="journal article" date="2003" name="J. Bacteriol.">
        <title>Distribution and organization of auxotrophic genes on the multichromosomal genome of Burkholderia multivorans ATCC 17616.</title>
        <authorList>
            <person name="Komatsu H."/>
            <person name="Imura Y."/>
            <person name="Ohori A."/>
            <person name="Nagata Y."/>
            <person name="Tsuda M."/>
        </authorList>
    </citation>
    <scope>NUCLEOTIDE SEQUENCE [GENOMIC DNA]</scope>
</reference>
<reference key="2">
    <citation type="submission" date="2007-10" db="EMBL/GenBank/DDBJ databases">
        <title>Complete sequence of chromosome 1 of Burkholderia multivorans ATCC 17616.</title>
        <authorList>
            <person name="Copeland A."/>
            <person name="Lucas S."/>
            <person name="Lapidus A."/>
            <person name="Barry K."/>
            <person name="Glavina del Rio T."/>
            <person name="Dalin E."/>
            <person name="Tice H."/>
            <person name="Pitluck S."/>
            <person name="Chain P."/>
            <person name="Malfatti S."/>
            <person name="Shin M."/>
            <person name="Vergez L."/>
            <person name="Schmutz J."/>
            <person name="Larimer F."/>
            <person name="Land M."/>
            <person name="Hauser L."/>
            <person name="Kyrpides N."/>
            <person name="Kim E."/>
            <person name="Tiedje J."/>
            <person name="Richardson P."/>
        </authorList>
    </citation>
    <scope>NUCLEOTIDE SEQUENCE [LARGE SCALE GENOMIC DNA]</scope>
    <source>
        <strain>ATCC 17616 / 249</strain>
    </source>
</reference>
<reference key="3">
    <citation type="submission" date="2007-04" db="EMBL/GenBank/DDBJ databases">
        <title>Complete genome sequence of Burkholderia multivorans ATCC 17616.</title>
        <authorList>
            <person name="Ohtsubo Y."/>
            <person name="Yamashita A."/>
            <person name="Kurokawa K."/>
            <person name="Takami H."/>
            <person name="Yuhara S."/>
            <person name="Nishiyama E."/>
            <person name="Endo R."/>
            <person name="Miyazaki R."/>
            <person name="Ono A."/>
            <person name="Yano K."/>
            <person name="Ito M."/>
            <person name="Sota M."/>
            <person name="Yuji N."/>
            <person name="Hattori M."/>
            <person name="Tsuda M."/>
        </authorList>
    </citation>
    <scope>NUCLEOTIDE SEQUENCE [LARGE SCALE GENOMIC DNA]</scope>
    <source>
        <strain>ATCC 17616 / 249</strain>
    </source>
</reference>
<sequence length="195" mass="21470">MRVAEVVRNTSETQIRVKLDLDGTGRQKLATGVPFLDHMLDQIARHGLVDLEVEAHGDTHIDDHHTVEDVGITLGQAVAKAIGDKKGIRRYGHAYVPLDEALSRVVIDFSGRPGLEFHVPFTRARIGTFDVDLSIEFFRGFVNHAGVTLHIDNLRGINAHHQLETVFKAFGRALRAAVELDERAAGQIPSTKGSL</sequence>
<accession>Q845V1</accession>
<accession>A9AE03</accession>
<proteinExistence type="inferred from homology"/>
<protein>
    <recommendedName>
        <fullName evidence="1">Imidazoleglycerol-phosphate dehydratase</fullName>
        <shortName evidence="1">IGPD</shortName>
        <ecNumber evidence="1">4.2.1.19</ecNumber>
    </recommendedName>
</protein>
<gene>
    <name evidence="1" type="primary">hisB</name>
    <name type="ordered locus">Bmul_0330</name>
    <name type="ordered locus">BMULJ_02924</name>
</gene>
<feature type="chain" id="PRO_0000158119" description="Imidazoleglycerol-phosphate dehydratase">
    <location>
        <begin position="1"/>
        <end position="195"/>
    </location>
</feature>
<comment type="catalytic activity">
    <reaction evidence="1">
        <text>D-erythro-1-(imidazol-4-yl)glycerol 3-phosphate = 3-(imidazol-4-yl)-2-oxopropyl phosphate + H2O</text>
        <dbReference type="Rhea" id="RHEA:11040"/>
        <dbReference type="ChEBI" id="CHEBI:15377"/>
        <dbReference type="ChEBI" id="CHEBI:57766"/>
        <dbReference type="ChEBI" id="CHEBI:58278"/>
        <dbReference type="EC" id="4.2.1.19"/>
    </reaction>
</comment>
<comment type="pathway">
    <text evidence="1">Amino-acid biosynthesis; L-histidine biosynthesis; L-histidine from 5-phospho-alpha-D-ribose 1-diphosphate: step 6/9.</text>
</comment>
<comment type="subcellular location">
    <subcellularLocation>
        <location evidence="1">Cytoplasm</location>
    </subcellularLocation>
</comment>
<comment type="similarity">
    <text evidence="1">Belongs to the imidazoleglycerol-phosphate dehydratase family.</text>
</comment>
<keyword id="KW-0028">Amino-acid biosynthesis</keyword>
<keyword id="KW-0963">Cytoplasm</keyword>
<keyword id="KW-0368">Histidine biosynthesis</keyword>
<keyword id="KW-0456">Lyase</keyword>
<keyword id="KW-1185">Reference proteome</keyword>
<evidence type="ECO:0000255" key="1">
    <source>
        <dbReference type="HAMAP-Rule" id="MF_00076"/>
    </source>
</evidence>
<name>HIS7_BURM1</name>
<dbReference type="EC" id="4.2.1.19" evidence="1"/>
<dbReference type="EMBL" id="AB091436">
    <property type="protein sequence ID" value="BAC65272.1"/>
    <property type="molecule type" value="Genomic_DNA"/>
</dbReference>
<dbReference type="EMBL" id="CP000868">
    <property type="protein sequence ID" value="ABX14025.1"/>
    <property type="molecule type" value="Genomic_DNA"/>
</dbReference>
<dbReference type="EMBL" id="AP009385">
    <property type="protein sequence ID" value="BAG44809.1"/>
    <property type="molecule type" value="Genomic_DNA"/>
</dbReference>
<dbReference type="RefSeq" id="WP_006400582.1">
    <property type="nucleotide sequence ID" value="NC_010804.1"/>
</dbReference>
<dbReference type="SMR" id="Q845V1"/>
<dbReference type="STRING" id="395019.BMULJ_02924"/>
<dbReference type="GeneID" id="93169966"/>
<dbReference type="KEGG" id="bmj:BMULJ_02924"/>
<dbReference type="KEGG" id="bmu:Bmul_0330"/>
<dbReference type="eggNOG" id="COG0131">
    <property type="taxonomic scope" value="Bacteria"/>
</dbReference>
<dbReference type="HOGENOM" id="CLU_044308_2_0_4"/>
<dbReference type="UniPathway" id="UPA00031">
    <property type="reaction ID" value="UER00011"/>
</dbReference>
<dbReference type="Proteomes" id="UP000008815">
    <property type="component" value="Chromosome 1"/>
</dbReference>
<dbReference type="GO" id="GO:0005737">
    <property type="term" value="C:cytoplasm"/>
    <property type="evidence" value="ECO:0007669"/>
    <property type="project" value="UniProtKB-SubCell"/>
</dbReference>
<dbReference type="GO" id="GO:0004424">
    <property type="term" value="F:imidazoleglycerol-phosphate dehydratase activity"/>
    <property type="evidence" value="ECO:0007669"/>
    <property type="project" value="UniProtKB-UniRule"/>
</dbReference>
<dbReference type="GO" id="GO:0000105">
    <property type="term" value="P:L-histidine biosynthetic process"/>
    <property type="evidence" value="ECO:0007669"/>
    <property type="project" value="UniProtKB-UniRule"/>
</dbReference>
<dbReference type="CDD" id="cd07914">
    <property type="entry name" value="IGPD"/>
    <property type="match status" value="1"/>
</dbReference>
<dbReference type="FunFam" id="3.30.230.40:FF:000002">
    <property type="entry name" value="Imidazoleglycerol-phosphate dehydratase"/>
    <property type="match status" value="1"/>
</dbReference>
<dbReference type="FunFam" id="3.30.230.40:FF:000003">
    <property type="entry name" value="Imidazoleglycerol-phosphate dehydratase HisB"/>
    <property type="match status" value="1"/>
</dbReference>
<dbReference type="Gene3D" id="3.30.230.40">
    <property type="entry name" value="Imidazole glycerol phosphate dehydratase, domain 1"/>
    <property type="match status" value="2"/>
</dbReference>
<dbReference type="HAMAP" id="MF_00076">
    <property type="entry name" value="HisB"/>
    <property type="match status" value="1"/>
</dbReference>
<dbReference type="InterPro" id="IPR038494">
    <property type="entry name" value="IGPD_sf"/>
</dbReference>
<dbReference type="InterPro" id="IPR000807">
    <property type="entry name" value="ImidazoleglycerolP_deHydtase"/>
</dbReference>
<dbReference type="InterPro" id="IPR020565">
    <property type="entry name" value="ImidazoleglycerP_deHydtase_CS"/>
</dbReference>
<dbReference type="InterPro" id="IPR020568">
    <property type="entry name" value="Ribosomal_Su5_D2-typ_SF"/>
</dbReference>
<dbReference type="NCBIfam" id="NF002106">
    <property type="entry name" value="PRK00951.1-1"/>
    <property type="match status" value="1"/>
</dbReference>
<dbReference type="NCBIfam" id="NF002109">
    <property type="entry name" value="PRK00951.1-5"/>
    <property type="match status" value="1"/>
</dbReference>
<dbReference type="NCBIfam" id="NF002111">
    <property type="entry name" value="PRK00951.2-1"/>
    <property type="match status" value="1"/>
</dbReference>
<dbReference type="NCBIfam" id="NF002114">
    <property type="entry name" value="PRK00951.2-4"/>
    <property type="match status" value="1"/>
</dbReference>
<dbReference type="PANTHER" id="PTHR23133:SF2">
    <property type="entry name" value="IMIDAZOLEGLYCEROL-PHOSPHATE DEHYDRATASE"/>
    <property type="match status" value="1"/>
</dbReference>
<dbReference type="PANTHER" id="PTHR23133">
    <property type="entry name" value="IMIDAZOLEGLYCEROL-PHOSPHATE DEHYDRATASE HIS7"/>
    <property type="match status" value="1"/>
</dbReference>
<dbReference type="Pfam" id="PF00475">
    <property type="entry name" value="IGPD"/>
    <property type="match status" value="1"/>
</dbReference>
<dbReference type="SUPFAM" id="SSF54211">
    <property type="entry name" value="Ribosomal protein S5 domain 2-like"/>
    <property type="match status" value="2"/>
</dbReference>
<dbReference type="PROSITE" id="PS00954">
    <property type="entry name" value="IGP_DEHYDRATASE_1"/>
    <property type="match status" value="1"/>
</dbReference>
<dbReference type="PROSITE" id="PS00955">
    <property type="entry name" value="IGP_DEHYDRATASE_2"/>
    <property type="match status" value="1"/>
</dbReference>
<organism>
    <name type="scientific">Burkholderia multivorans (strain ATCC 17616 / 249)</name>
    <dbReference type="NCBI Taxonomy" id="395019"/>
    <lineage>
        <taxon>Bacteria</taxon>
        <taxon>Pseudomonadati</taxon>
        <taxon>Pseudomonadota</taxon>
        <taxon>Betaproteobacteria</taxon>
        <taxon>Burkholderiales</taxon>
        <taxon>Burkholderiaceae</taxon>
        <taxon>Burkholderia</taxon>
        <taxon>Burkholderia cepacia complex</taxon>
    </lineage>
</organism>